<proteinExistence type="predicted"/>
<organism>
    <name type="scientific">Archaeoglobus fulgidus (strain ATCC 49558 / DSM 4304 / JCM 9628 / NBRC 100126 / VC-16)</name>
    <dbReference type="NCBI Taxonomy" id="224325"/>
    <lineage>
        <taxon>Archaea</taxon>
        <taxon>Methanobacteriati</taxon>
        <taxon>Methanobacteriota</taxon>
        <taxon>Archaeoglobi</taxon>
        <taxon>Archaeoglobales</taxon>
        <taxon>Archaeoglobaceae</taxon>
        <taxon>Archaeoglobus</taxon>
    </lineage>
</organism>
<evidence type="ECO:0000255" key="1"/>
<evidence type="ECO:0000305" key="2"/>
<keyword id="KW-0472">Membrane</keyword>
<keyword id="KW-1185">Reference proteome</keyword>
<keyword id="KW-0812">Transmembrane</keyword>
<keyword id="KW-1133">Transmembrane helix</keyword>
<gene>
    <name type="ordered locus">AF_0761</name>
</gene>
<dbReference type="EMBL" id="AE000782">
    <property type="protein sequence ID" value="AAB90484.1"/>
    <property type="molecule type" value="Genomic_DNA"/>
</dbReference>
<dbReference type="PIR" id="A69345">
    <property type="entry name" value="A69345"/>
</dbReference>
<dbReference type="RefSeq" id="WP_010878264.1">
    <property type="nucleotide sequence ID" value="NC_000917.1"/>
</dbReference>
<dbReference type="SMR" id="O29497"/>
<dbReference type="STRING" id="224325.AF_0761"/>
<dbReference type="PaxDb" id="224325-AF_0761"/>
<dbReference type="EnsemblBacteria" id="AAB90484">
    <property type="protein sequence ID" value="AAB90484"/>
    <property type="gene ID" value="AF_0761"/>
</dbReference>
<dbReference type="KEGG" id="afu:AF_0761"/>
<dbReference type="eggNOG" id="arCOG06552">
    <property type="taxonomic scope" value="Archaea"/>
</dbReference>
<dbReference type="HOGENOM" id="CLU_2230236_0_0_2"/>
<dbReference type="OrthoDB" id="3010at2231"/>
<dbReference type="Proteomes" id="UP000002199">
    <property type="component" value="Chromosome"/>
</dbReference>
<dbReference type="GO" id="GO:0016020">
    <property type="term" value="C:membrane"/>
    <property type="evidence" value="ECO:0007669"/>
    <property type="project" value="UniProtKB-SubCell"/>
</dbReference>
<name>Y761_ARCFU</name>
<reference key="1">
    <citation type="journal article" date="1997" name="Nature">
        <title>The complete genome sequence of the hyperthermophilic, sulphate-reducing archaeon Archaeoglobus fulgidus.</title>
        <authorList>
            <person name="Klenk H.-P."/>
            <person name="Clayton R.A."/>
            <person name="Tomb J.-F."/>
            <person name="White O."/>
            <person name="Nelson K.E."/>
            <person name="Ketchum K.A."/>
            <person name="Dodson R.J."/>
            <person name="Gwinn M.L."/>
            <person name="Hickey E.K."/>
            <person name="Peterson J.D."/>
            <person name="Richardson D.L."/>
            <person name="Kerlavage A.R."/>
            <person name="Graham D.E."/>
            <person name="Kyrpides N.C."/>
            <person name="Fleischmann R.D."/>
            <person name="Quackenbush J."/>
            <person name="Lee N.H."/>
            <person name="Sutton G.G."/>
            <person name="Gill S.R."/>
            <person name="Kirkness E.F."/>
            <person name="Dougherty B.A."/>
            <person name="McKenney K."/>
            <person name="Adams M.D."/>
            <person name="Loftus B.J."/>
            <person name="Peterson S.N."/>
            <person name="Reich C.I."/>
            <person name="McNeil L.K."/>
            <person name="Badger J.H."/>
            <person name="Glodek A."/>
            <person name="Zhou L."/>
            <person name="Overbeek R."/>
            <person name="Gocayne J.D."/>
            <person name="Weidman J.F."/>
            <person name="McDonald L.A."/>
            <person name="Utterback T.R."/>
            <person name="Cotton M.D."/>
            <person name="Spriggs T."/>
            <person name="Artiach P."/>
            <person name="Kaine B.P."/>
            <person name="Sykes S.M."/>
            <person name="Sadow P.W."/>
            <person name="D'Andrea K.P."/>
            <person name="Bowman C."/>
            <person name="Fujii C."/>
            <person name="Garland S.A."/>
            <person name="Mason T.M."/>
            <person name="Olsen G.J."/>
            <person name="Fraser C.M."/>
            <person name="Smith H.O."/>
            <person name="Woese C.R."/>
            <person name="Venter J.C."/>
        </authorList>
    </citation>
    <scope>NUCLEOTIDE SEQUENCE [LARGE SCALE GENOMIC DNA]</scope>
    <source>
        <strain>ATCC 49558 / DSM 4304 / JCM 9628 / NBRC 100126 / VC-16</strain>
    </source>
</reference>
<feature type="chain" id="PRO_0000127919" description="Uncharacterized protein AF_0761">
    <location>
        <begin position="1"/>
        <end position="105"/>
    </location>
</feature>
<feature type="transmembrane region" description="Helical" evidence="1">
    <location>
        <begin position="13"/>
        <end position="35"/>
    </location>
</feature>
<comment type="subcellular location">
    <subcellularLocation>
        <location evidence="2">Membrane</location>
        <topology evidence="2">Single-pass membrane protein</topology>
    </subcellularLocation>
</comment>
<protein>
    <recommendedName>
        <fullName>Uncharacterized protein AF_0761</fullName>
    </recommendedName>
</protein>
<accession>O29497</accession>
<sequence>MENIMDEKGQMILLFAFVVVIVVLTLSYVYAQNIIAGVESSRAMLAFPKEEIRNLEEIQKNFGGDSEVNSQIQTLCAKNGWVCYVGVDKVEFKNVEVDYCAGSDC</sequence>